<accession>Q0K5N7</accession>
<keyword id="KW-0067">ATP-binding</keyword>
<keyword id="KW-0436">Ligase</keyword>
<keyword id="KW-0547">Nucleotide-binding</keyword>
<keyword id="KW-1185">Reference proteome</keyword>
<protein>
    <recommendedName>
        <fullName evidence="1">Putative glutamate--cysteine ligase 2</fullName>
        <ecNumber evidence="1">6.3.2.2</ecNumber>
    </recommendedName>
    <alternativeName>
        <fullName evidence="1">Gamma-glutamylcysteine synthetase 2</fullName>
        <shortName evidence="1">GCS 2</shortName>
        <shortName evidence="1">Gamma-GCS 2</shortName>
    </alternativeName>
</protein>
<reference key="1">
    <citation type="journal article" date="2006" name="Nat. Biotechnol.">
        <title>Genome sequence of the bioplastic-producing 'Knallgas' bacterium Ralstonia eutropha H16.</title>
        <authorList>
            <person name="Pohlmann A."/>
            <person name="Fricke W.F."/>
            <person name="Reinecke F."/>
            <person name="Kusian B."/>
            <person name="Liesegang H."/>
            <person name="Cramm R."/>
            <person name="Eitinger T."/>
            <person name="Ewering C."/>
            <person name="Poetter M."/>
            <person name="Schwartz E."/>
            <person name="Strittmatter A."/>
            <person name="Voss I."/>
            <person name="Gottschalk G."/>
            <person name="Steinbuechel A."/>
            <person name="Friedrich B."/>
            <person name="Bowien B."/>
        </authorList>
    </citation>
    <scope>NUCLEOTIDE SEQUENCE [LARGE SCALE GENOMIC DNA]</scope>
    <source>
        <strain>ATCC 17699 / DSM 428 / KCTC 22496 / NCIMB 10442 / H16 / Stanier 337</strain>
    </source>
</reference>
<name>GCS2_CUPNH</name>
<gene>
    <name type="ordered locus">H16_A3627</name>
</gene>
<dbReference type="EC" id="6.3.2.2" evidence="1"/>
<dbReference type="EMBL" id="AM260479">
    <property type="protein sequence ID" value="CAJ94684.1"/>
    <property type="molecule type" value="Genomic_DNA"/>
</dbReference>
<dbReference type="RefSeq" id="WP_010812176.1">
    <property type="nucleotide sequence ID" value="NZ_CP039287.1"/>
</dbReference>
<dbReference type="SMR" id="Q0K5N7"/>
<dbReference type="STRING" id="381666.H16_A3627"/>
<dbReference type="KEGG" id="reh:H16_A3627"/>
<dbReference type="eggNOG" id="COG2170">
    <property type="taxonomic scope" value="Bacteria"/>
</dbReference>
<dbReference type="HOGENOM" id="CLU_044848_1_1_4"/>
<dbReference type="OrthoDB" id="9769628at2"/>
<dbReference type="Proteomes" id="UP000008210">
    <property type="component" value="Chromosome 1"/>
</dbReference>
<dbReference type="GO" id="GO:0005524">
    <property type="term" value="F:ATP binding"/>
    <property type="evidence" value="ECO:0007669"/>
    <property type="project" value="UniProtKB-KW"/>
</dbReference>
<dbReference type="GO" id="GO:0004357">
    <property type="term" value="F:glutamate-cysteine ligase activity"/>
    <property type="evidence" value="ECO:0007669"/>
    <property type="project" value="UniProtKB-EC"/>
</dbReference>
<dbReference type="GO" id="GO:0042398">
    <property type="term" value="P:modified amino acid biosynthetic process"/>
    <property type="evidence" value="ECO:0007669"/>
    <property type="project" value="InterPro"/>
</dbReference>
<dbReference type="Gene3D" id="3.30.590.20">
    <property type="match status" value="1"/>
</dbReference>
<dbReference type="HAMAP" id="MF_01609">
    <property type="entry name" value="Glu_cys_ligase_2"/>
    <property type="match status" value="1"/>
</dbReference>
<dbReference type="InterPro" id="IPR050141">
    <property type="entry name" value="GCL_type2/YbdK_subfam"/>
</dbReference>
<dbReference type="InterPro" id="IPR006336">
    <property type="entry name" value="GCS2"/>
</dbReference>
<dbReference type="InterPro" id="IPR014746">
    <property type="entry name" value="Gln_synth/guanido_kin_cat_dom"/>
</dbReference>
<dbReference type="InterPro" id="IPR011793">
    <property type="entry name" value="YbdK"/>
</dbReference>
<dbReference type="NCBIfam" id="TIGR02050">
    <property type="entry name" value="gshA_cyan_rel"/>
    <property type="match status" value="1"/>
</dbReference>
<dbReference type="NCBIfam" id="NF010040">
    <property type="entry name" value="PRK13516.1"/>
    <property type="match status" value="1"/>
</dbReference>
<dbReference type="PANTHER" id="PTHR36510">
    <property type="entry name" value="GLUTAMATE--CYSTEINE LIGASE 2-RELATED"/>
    <property type="match status" value="1"/>
</dbReference>
<dbReference type="PANTHER" id="PTHR36510:SF1">
    <property type="entry name" value="GLUTAMATE--CYSTEINE LIGASE 2-RELATED"/>
    <property type="match status" value="1"/>
</dbReference>
<dbReference type="Pfam" id="PF04107">
    <property type="entry name" value="GCS2"/>
    <property type="match status" value="1"/>
</dbReference>
<dbReference type="SUPFAM" id="SSF55931">
    <property type="entry name" value="Glutamine synthetase/guanido kinase"/>
    <property type="match status" value="1"/>
</dbReference>
<comment type="function">
    <text evidence="1">ATP-dependent carboxylate-amine ligase which exhibits weak glutamate--cysteine ligase activity.</text>
</comment>
<comment type="catalytic activity">
    <reaction evidence="1">
        <text>L-cysteine + L-glutamate + ATP = gamma-L-glutamyl-L-cysteine + ADP + phosphate + H(+)</text>
        <dbReference type="Rhea" id="RHEA:13285"/>
        <dbReference type="ChEBI" id="CHEBI:15378"/>
        <dbReference type="ChEBI" id="CHEBI:29985"/>
        <dbReference type="ChEBI" id="CHEBI:30616"/>
        <dbReference type="ChEBI" id="CHEBI:35235"/>
        <dbReference type="ChEBI" id="CHEBI:43474"/>
        <dbReference type="ChEBI" id="CHEBI:58173"/>
        <dbReference type="ChEBI" id="CHEBI:456216"/>
        <dbReference type="EC" id="6.3.2.2"/>
    </reaction>
</comment>
<comment type="similarity">
    <text evidence="1">Belongs to the glutamate--cysteine ligase type 2 family. YbdK subfamily.</text>
</comment>
<feature type="chain" id="PRO_0000291511" description="Putative glutamate--cysteine ligase 2">
    <location>
        <begin position="1"/>
        <end position="371"/>
    </location>
</feature>
<proteinExistence type="inferred from homology"/>
<organism>
    <name type="scientific">Cupriavidus necator (strain ATCC 17699 / DSM 428 / KCTC 22496 / NCIMB 10442 / H16 / Stanier 337)</name>
    <name type="common">Ralstonia eutropha</name>
    <dbReference type="NCBI Taxonomy" id="381666"/>
    <lineage>
        <taxon>Bacteria</taxon>
        <taxon>Pseudomonadati</taxon>
        <taxon>Pseudomonadota</taxon>
        <taxon>Betaproteobacteria</taxon>
        <taxon>Burkholderiales</taxon>
        <taxon>Burkholderiaceae</taxon>
        <taxon>Cupriavidus</taxon>
    </lineage>
</organism>
<sequence length="371" mass="41722">MSLETFKHSEALTFGVELELQLVNRHDYDLAPFAPDLLRALKGAEHAGDIKPEISPSMIEISTGICHTYQQALEELTVMRDLMVAASRSLNLGIAGGGTHPFQQWADRTISDSPRYQYISELYGYLAKQFTVFGQHVHIGCPSADESLFLLHAIGRYVPHFVALAASSPYVQGVDTGFASARLNSVAAFPMSGRAPFLLTWDAFTAYFEKMRNTGVIESMKDFYWDIRPKPEFGTIEVRVMDTPLTVQRACDIAAYIQMLARYLLLSRPFMPQEDDYLVYTFNRFQACRFGLEGEYVHPNELTRMPIADHILSICDALVPHAEALGSLEALANIRALAERRDGDAEWLRQVDADARSQRETVRKACDRWAA</sequence>
<evidence type="ECO:0000255" key="1">
    <source>
        <dbReference type="HAMAP-Rule" id="MF_01609"/>
    </source>
</evidence>